<organism>
    <name type="scientific">Bacillus subtilis (strain 168)</name>
    <dbReference type="NCBI Taxonomy" id="224308"/>
    <lineage>
        <taxon>Bacteria</taxon>
        <taxon>Bacillati</taxon>
        <taxon>Bacillota</taxon>
        <taxon>Bacilli</taxon>
        <taxon>Bacillales</taxon>
        <taxon>Bacillaceae</taxon>
        <taxon>Bacillus</taxon>
    </lineage>
</organism>
<accession>O34596</accession>
<evidence type="ECO:0000269" key="1">
    <source>
    </source>
</evidence>
<evidence type="ECO:0000269" key="2">
    <source>
    </source>
</evidence>
<evidence type="ECO:0000305" key="3"/>
<evidence type="ECO:0007829" key="4">
    <source>
        <dbReference type="PDB" id="2PRV"/>
    </source>
</evidence>
<dbReference type="EMBL" id="AF027868">
    <property type="protein sequence ID" value="AAB84463.1"/>
    <property type="molecule type" value="Genomic_DNA"/>
</dbReference>
<dbReference type="EMBL" id="AL009126">
    <property type="protein sequence ID" value="CAB13791.1"/>
    <property type="molecule type" value="Genomic_DNA"/>
</dbReference>
<dbReference type="PIR" id="B69899">
    <property type="entry name" value="B69899"/>
</dbReference>
<dbReference type="RefSeq" id="WP_003231326.1">
    <property type="nucleotide sequence ID" value="NZ_OZ025638.1"/>
</dbReference>
<dbReference type="PDB" id="2PRV">
    <property type="method" value="X-ray"/>
    <property type="resolution" value="1.30 A"/>
    <property type="chains" value="A/B=1-152"/>
</dbReference>
<dbReference type="PDBsum" id="2PRV"/>
<dbReference type="SMR" id="O34596"/>
<dbReference type="FunCoup" id="O34596">
    <property type="interactions" value="23"/>
</dbReference>
<dbReference type="IntAct" id="O34596">
    <property type="interactions" value="1"/>
</dbReference>
<dbReference type="MINT" id="O34596"/>
<dbReference type="STRING" id="224308.BSU18990"/>
<dbReference type="jPOST" id="O34596"/>
<dbReference type="PaxDb" id="224308-BSU18990"/>
<dbReference type="EnsemblBacteria" id="CAB13791">
    <property type="protein sequence ID" value="CAB13791"/>
    <property type="gene ID" value="BSU_18990"/>
</dbReference>
<dbReference type="GeneID" id="939629"/>
<dbReference type="KEGG" id="bsu:BSU18990"/>
<dbReference type="PATRIC" id="fig|224308.179.peg.2077"/>
<dbReference type="eggNOG" id="ENOG5032WNB">
    <property type="taxonomic scope" value="Bacteria"/>
</dbReference>
<dbReference type="InParanoid" id="O34596"/>
<dbReference type="OrthoDB" id="5880263at2"/>
<dbReference type="BioCyc" id="BSUB:BSU18990-MONOMER"/>
<dbReference type="EvolutionaryTrace" id="O34596"/>
<dbReference type="Proteomes" id="UP000001570">
    <property type="component" value="Chromosome"/>
</dbReference>
<dbReference type="GO" id="GO:0005737">
    <property type="term" value="C:cytoplasm"/>
    <property type="evidence" value="ECO:0007669"/>
    <property type="project" value="UniProtKB-SubCell"/>
</dbReference>
<dbReference type="Gene3D" id="3.40.1580.10">
    <property type="entry name" value="SMI1/KNR4-like"/>
    <property type="match status" value="1"/>
</dbReference>
<dbReference type="InterPro" id="IPR018958">
    <property type="entry name" value="Knr4/Smi1-like_dom"/>
</dbReference>
<dbReference type="InterPro" id="IPR037883">
    <property type="entry name" value="Knr4/Smi1-like_sf"/>
</dbReference>
<dbReference type="Pfam" id="PF14567">
    <property type="entry name" value="SUKH_5"/>
    <property type="match status" value="1"/>
</dbReference>
<dbReference type="SMART" id="SM00860">
    <property type="entry name" value="SMI1_KNR4"/>
    <property type="match status" value="1"/>
</dbReference>
<dbReference type="SUPFAM" id="SSF160631">
    <property type="entry name" value="SMI1/KNR4-like"/>
    <property type="match status" value="1"/>
</dbReference>
<keyword id="KW-0002">3D-structure</keyword>
<keyword id="KW-0963">Cytoplasm</keyword>
<keyword id="KW-1185">Reference proteome</keyword>
<reference key="1">
    <citation type="submission" date="1997-11" db="EMBL/GenBank/DDBJ databases">
        <title>Sequence analysis of the Bacillus subtilis chromosome region between the terC and odhAB loci cloned in a yeast artificial chromosome.</title>
        <authorList>
            <person name="Lapidus A."/>
            <person name="Galleron N."/>
            <person name="Sorokin A."/>
            <person name="Ehrlich S.D."/>
        </authorList>
    </citation>
    <scope>NUCLEOTIDE SEQUENCE [GENOMIC DNA]</scope>
</reference>
<reference key="2">
    <citation type="journal article" date="1997" name="Nature">
        <title>The complete genome sequence of the Gram-positive bacterium Bacillus subtilis.</title>
        <authorList>
            <person name="Kunst F."/>
            <person name="Ogasawara N."/>
            <person name="Moszer I."/>
            <person name="Albertini A.M."/>
            <person name="Alloni G."/>
            <person name="Azevedo V."/>
            <person name="Bertero M.G."/>
            <person name="Bessieres P."/>
            <person name="Bolotin A."/>
            <person name="Borchert S."/>
            <person name="Borriss R."/>
            <person name="Boursier L."/>
            <person name="Brans A."/>
            <person name="Braun M."/>
            <person name="Brignell S.C."/>
            <person name="Bron S."/>
            <person name="Brouillet S."/>
            <person name="Bruschi C.V."/>
            <person name="Caldwell B."/>
            <person name="Capuano V."/>
            <person name="Carter N.M."/>
            <person name="Choi S.-K."/>
            <person name="Codani J.-J."/>
            <person name="Connerton I.F."/>
            <person name="Cummings N.J."/>
            <person name="Daniel R.A."/>
            <person name="Denizot F."/>
            <person name="Devine K.M."/>
            <person name="Duesterhoeft A."/>
            <person name="Ehrlich S.D."/>
            <person name="Emmerson P.T."/>
            <person name="Entian K.-D."/>
            <person name="Errington J."/>
            <person name="Fabret C."/>
            <person name="Ferrari E."/>
            <person name="Foulger D."/>
            <person name="Fritz C."/>
            <person name="Fujita M."/>
            <person name="Fujita Y."/>
            <person name="Fuma S."/>
            <person name="Galizzi A."/>
            <person name="Galleron N."/>
            <person name="Ghim S.-Y."/>
            <person name="Glaser P."/>
            <person name="Goffeau A."/>
            <person name="Golightly E.J."/>
            <person name="Grandi G."/>
            <person name="Guiseppi G."/>
            <person name="Guy B.J."/>
            <person name="Haga K."/>
            <person name="Haiech J."/>
            <person name="Harwood C.R."/>
            <person name="Henaut A."/>
            <person name="Hilbert H."/>
            <person name="Holsappel S."/>
            <person name="Hosono S."/>
            <person name="Hullo M.-F."/>
            <person name="Itaya M."/>
            <person name="Jones L.-M."/>
            <person name="Joris B."/>
            <person name="Karamata D."/>
            <person name="Kasahara Y."/>
            <person name="Klaerr-Blanchard M."/>
            <person name="Klein C."/>
            <person name="Kobayashi Y."/>
            <person name="Koetter P."/>
            <person name="Koningstein G."/>
            <person name="Krogh S."/>
            <person name="Kumano M."/>
            <person name="Kurita K."/>
            <person name="Lapidus A."/>
            <person name="Lardinois S."/>
            <person name="Lauber J."/>
            <person name="Lazarevic V."/>
            <person name="Lee S.-M."/>
            <person name="Levine A."/>
            <person name="Liu H."/>
            <person name="Masuda S."/>
            <person name="Mauel C."/>
            <person name="Medigue C."/>
            <person name="Medina N."/>
            <person name="Mellado R.P."/>
            <person name="Mizuno M."/>
            <person name="Moestl D."/>
            <person name="Nakai S."/>
            <person name="Noback M."/>
            <person name="Noone D."/>
            <person name="O'Reilly M."/>
            <person name="Ogawa K."/>
            <person name="Ogiwara A."/>
            <person name="Oudega B."/>
            <person name="Park S.-H."/>
            <person name="Parro V."/>
            <person name="Pohl T.M."/>
            <person name="Portetelle D."/>
            <person name="Porwollik S."/>
            <person name="Prescott A.M."/>
            <person name="Presecan E."/>
            <person name="Pujic P."/>
            <person name="Purnelle B."/>
            <person name="Rapoport G."/>
            <person name="Rey M."/>
            <person name="Reynolds S."/>
            <person name="Rieger M."/>
            <person name="Rivolta C."/>
            <person name="Rocha E."/>
            <person name="Roche B."/>
            <person name="Rose M."/>
            <person name="Sadaie Y."/>
            <person name="Sato T."/>
            <person name="Scanlan E."/>
            <person name="Schleich S."/>
            <person name="Schroeter R."/>
            <person name="Scoffone F."/>
            <person name="Sekiguchi J."/>
            <person name="Sekowska A."/>
            <person name="Seror S.J."/>
            <person name="Serror P."/>
            <person name="Shin B.-S."/>
            <person name="Soldo B."/>
            <person name="Sorokin A."/>
            <person name="Tacconi E."/>
            <person name="Takagi T."/>
            <person name="Takahashi H."/>
            <person name="Takemaru K."/>
            <person name="Takeuchi M."/>
            <person name="Tamakoshi A."/>
            <person name="Tanaka T."/>
            <person name="Terpstra P."/>
            <person name="Tognoni A."/>
            <person name="Tosato V."/>
            <person name="Uchiyama S."/>
            <person name="Vandenbol M."/>
            <person name="Vannier F."/>
            <person name="Vassarotti A."/>
            <person name="Viari A."/>
            <person name="Wambutt R."/>
            <person name="Wedler E."/>
            <person name="Wedler H."/>
            <person name="Weitzenegger T."/>
            <person name="Winters P."/>
            <person name="Wipat A."/>
            <person name="Yamamoto H."/>
            <person name="Yamane K."/>
            <person name="Yasumoto K."/>
            <person name="Yata K."/>
            <person name="Yoshida K."/>
            <person name="Yoshikawa H.-F."/>
            <person name="Zumstein E."/>
            <person name="Yoshikawa H."/>
            <person name="Danchin A."/>
        </authorList>
    </citation>
    <scope>NUCLEOTIDE SEQUENCE [LARGE SCALE GENOMIC DNA]</scope>
    <source>
        <strain>168</strain>
    </source>
</reference>
<reference key="3">
    <citation type="journal article" date="2012" name="FEBS Lett.">
        <title>A novel family of toxin/antitoxin proteins in Bacillus species.</title>
        <authorList>
            <person name="Holberger L.E."/>
            <person name="Garza-Sanchez F."/>
            <person name="Lamoureux J."/>
            <person name="Low D.A."/>
            <person name="Hayes C.S."/>
        </authorList>
    </citation>
    <scope>FUNCTION AS AN IMMUNITY PROTEIN</scope>
    <scope>INTERACTION WITH YOBL</scope>
    <scope>EXPRESSION IN E.COLI</scope>
    <source>
        <strain>168</strain>
    </source>
</reference>
<reference key="4">
    <citation type="journal article" date="2021" name="PLoS Genet.">
        <title>Diverse LXG toxin and antitoxin systems specifically mediate intraspecies competition in Bacillus subtilis biofilms.</title>
        <authorList>
            <person name="Kobayashi K."/>
        </authorList>
    </citation>
    <scope>FUNCTION AS AN IMMUNITY PROTEIN</scope>
    <scope>INDUCTION</scope>
    <scope>DISRUPTION PHENOTYPE</scope>
    <source>
        <strain>168 / Marburg / ATCC 6051 / DSM 10 / JCM 1465 / NBRC 13719 / NCIMB 3610 / NRRL NRS-744 / VKM B-501</strain>
    </source>
</reference>
<reference key="5">
    <citation type="submission" date="2007-05" db="PDB data bank">
        <title>Crystal structure of uncharacterized protein (NP_389780.1) from Bacillus subtilis at 1.30 A resolution.</title>
        <authorList>
            <consortium name="Joint center for structural genomics (JCSG)"/>
        </authorList>
    </citation>
    <scope>X-RAY CRYSTALLOGRAPHY (1.3 ANGSTROMS)</scope>
</reference>
<protein>
    <recommendedName>
        <fullName>Immunity protein YobK</fullName>
    </recommendedName>
</protein>
<feature type="chain" id="PRO_0000049654" description="Immunity protein YobK">
    <location>
        <begin position="1"/>
        <end position="152"/>
    </location>
</feature>
<feature type="helix" evidence="4">
    <location>
        <begin position="1"/>
        <end position="13"/>
    </location>
</feature>
<feature type="helix" evidence="4">
    <location>
        <begin position="14"/>
        <end position="16"/>
    </location>
</feature>
<feature type="helix" evidence="4">
    <location>
        <begin position="25"/>
        <end position="35"/>
    </location>
</feature>
<feature type="helix" evidence="4">
    <location>
        <begin position="41"/>
        <end position="50"/>
    </location>
</feature>
<feature type="strand" evidence="4">
    <location>
        <begin position="52"/>
        <end position="55"/>
    </location>
</feature>
<feature type="strand" evidence="4">
    <location>
        <begin position="58"/>
        <end position="60"/>
    </location>
</feature>
<feature type="strand" evidence="4">
    <location>
        <begin position="65"/>
        <end position="67"/>
    </location>
</feature>
<feature type="helix" evidence="4">
    <location>
        <begin position="69"/>
        <end position="80"/>
    </location>
</feature>
<feature type="strand" evidence="4">
    <location>
        <begin position="87"/>
        <end position="92"/>
    </location>
</feature>
<feature type="strand" evidence="4">
    <location>
        <begin position="94"/>
        <end position="101"/>
    </location>
</feature>
<feature type="strand" evidence="4">
    <location>
        <begin position="112"/>
        <end position="116"/>
    </location>
</feature>
<feature type="turn" evidence="4">
    <location>
        <begin position="117"/>
        <end position="119"/>
    </location>
</feature>
<feature type="strand" evidence="4">
    <location>
        <begin position="120"/>
        <end position="128"/>
    </location>
</feature>
<feature type="helix" evidence="4">
    <location>
        <begin position="129"/>
        <end position="144"/>
    </location>
</feature>
<gene>
    <name type="primary">yobK</name>
    <name type="ordered locus">BSU18990</name>
</gene>
<sequence length="152" mass="17715">MIYSKVENFINENKQNAIFTEGASHENIGRIEENLQCDLPNSYKWFLEKYGAGGLFGVLVLGYNFDHASVVNRTNEYKEHYGLTDGLVVIEDVDYFAYCLDTNKMKDGECPVVEWDRVIGYQDTVADSFIEFFYNKIQEAKDDWDEDEDWDD</sequence>
<proteinExistence type="evidence at protein level"/>
<name>YOBK_BACSU</name>
<comment type="function">
    <text evidence="1 2">Immunity component of one of 6 LXG toxin-immunity modules in this strain. They promote kin selection, mediate competition in biofilms, and drive spatial segregation of different strains, indicating that LXG toxins may help avoid warfare between strains in biofilms. Mediates intercellular competition during biofilm formation; disruption of the operon disadvantages the bacteria, but overexpression of the cognate immunity protein restores growth in competition with wild-type. In situ neutralizes the toxic effect of cognate toxin YobL (PubMed:34280190). Neutralizes the toxic activity of cognate toxin YobL upon expression in E.coli. Does not have immunity protein activity on other LXG toxins (PubMed:22200572).</text>
</comment>
<comment type="subunit">
    <text evidence="1">Interacts with cognate toxin YobL but not with non-cognate putative toxin YeeF. The interaction inhibits the toxic activity of YobL.</text>
</comment>
<comment type="subcellular location">
    <subcellularLocation>
        <location evidence="3">Cytoplasm</location>
    </subcellularLocation>
</comment>
<comment type="induction">
    <text evidence="2">Expressed on rich and minimal solid media likely in early stationary phase; not dependent on DegSU. Not expressed in liquid LB, but only under conditions that promote biofilm formation.</text>
</comment>
<comment type="disruption phenotype">
    <text evidence="2">Deletion of the yobL-yobK operon has no visible growth phenotype, however it is out-competed by wild-type cells.</text>
</comment>